<sequence>MNREEVQLLGFEIVAFAGDARSKFLEALTAAQAGDFAKADALIEEGNNCIAEAHRAQTSLLAKEAQGDDIAYSVTMMHGQDHLMTTILLKDLMKHLLEFYKRG</sequence>
<accession>Q5HE14</accession>
<comment type="function">
    <text evidence="1">The phosphoenolpyruvate-dependent sugar phosphotransferase system (sugar PTS), a major carbohydrate active transport system, catalyzes the phosphorylation of incoming sugar substrates concomitantly with their translocation across the cell membrane. The enzyme II LacEF PTS system is involved in lactose transport.</text>
</comment>
<comment type="cofactor">
    <cofactor evidence="2">
        <name>Mg(2+)</name>
        <dbReference type="ChEBI" id="CHEBI:18420"/>
    </cofactor>
    <text evidence="2">Binds 1 Mg(2+) ion per trimer.</text>
</comment>
<comment type="subunit">
    <text evidence="1">Homotrimer.</text>
</comment>
<comment type="subcellular location">
    <subcellularLocation>
        <location evidence="4">Cytoplasm</location>
    </subcellularLocation>
</comment>
<comment type="induction">
    <text evidence="1">Induced by lactose, galactose and galactose-6-P. Repressed by glucose.</text>
</comment>
<comment type="domain">
    <text evidence="3">The PTS EIIA type-3 domain is phosphorylated by phospho-HPr on a histidyl residue. Then, it transfers the phosphoryl group to the PTS EIIB type-3 domain.</text>
</comment>
<feature type="chain" id="PRO_0000186598" description="PTS system lactose-specific EIIA component">
    <location>
        <begin position="1"/>
        <end position="103"/>
    </location>
</feature>
<feature type="domain" description="PTS EIIA type-3" evidence="3">
    <location>
        <begin position="1"/>
        <end position="102"/>
    </location>
</feature>
<feature type="active site" description="Tele-phosphohistidine intermediate" evidence="1">
    <location>
        <position position="78"/>
    </location>
</feature>
<feature type="binding site" evidence="2">
    <location>
        <position position="81"/>
    </location>
    <ligand>
        <name>Mg(2+)</name>
        <dbReference type="ChEBI" id="CHEBI:18420"/>
        <note>ligand shared between all trimeric partners</note>
    </ligand>
</feature>
<feature type="modified residue" description="Phosphohistidine; by HPr" evidence="1 3">
    <location>
        <position position="78"/>
    </location>
</feature>
<organism>
    <name type="scientific">Staphylococcus aureus (strain COL)</name>
    <dbReference type="NCBI Taxonomy" id="93062"/>
    <lineage>
        <taxon>Bacteria</taxon>
        <taxon>Bacillati</taxon>
        <taxon>Bacillota</taxon>
        <taxon>Bacilli</taxon>
        <taxon>Bacillales</taxon>
        <taxon>Staphylococcaceae</taxon>
        <taxon>Staphylococcus</taxon>
    </lineage>
</organism>
<evidence type="ECO:0000250" key="1">
    <source>
        <dbReference type="UniProtKB" id="P0A0D6"/>
    </source>
</evidence>
<evidence type="ECO:0000250" key="2">
    <source>
        <dbReference type="UniProtKB" id="P23532"/>
    </source>
</evidence>
<evidence type="ECO:0000255" key="3">
    <source>
        <dbReference type="PROSITE-ProRule" id="PRU00418"/>
    </source>
</evidence>
<evidence type="ECO:0000305" key="4"/>
<proteinExistence type="inferred from homology"/>
<dbReference type="EMBL" id="CP000046">
    <property type="protein sequence ID" value="AAW37058.1"/>
    <property type="molecule type" value="Genomic_DNA"/>
</dbReference>
<dbReference type="RefSeq" id="WP_001078309.1">
    <property type="nucleotide sequence ID" value="NZ_JBGOFO010000004.1"/>
</dbReference>
<dbReference type="SMR" id="Q5HE14"/>
<dbReference type="KEGG" id="sac:SACOL2182"/>
<dbReference type="HOGENOM" id="CLU_152490_1_0_9"/>
<dbReference type="Proteomes" id="UP000000530">
    <property type="component" value="Chromosome"/>
</dbReference>
<dbReference type="GO" id="GO:0005737">
    <property type="term" value="C:cytoplasm"/>
    <property type="evidence" value="ECO:0007669"/>
    <property type="project" value="UniProtKB-SubCell"/>
</dbReference>
<dbReference type="GO" id="GO:0046872">
    <property type="term" value="F:metal ion binding"/>
    <property type="evidence" value="ECO:0007669"/>
    <property type="project" value="UniProtKB-KW"/>
</dbReference>
<dbReference type="GO" id="GO:0016740">
    <property type="term" value="F:transferase activity"/>
    <property type="evidence" value="ECO:0007669"/>
    <property type="project" value="UniProtKB-KW"/>
</dbReference>
<dbReference type="GO" id="GO:0009401">
    <property type="term" value="P:phosphoenolpyruvate-dependent sugar phosphotransferase system"/>
    <property type="evidence" value="ECO:0007669"/>
    <property type="project" value="UniProtKB-KW"/>
</dbReference>
<dbReference type="CDD" id="cd00215">
    <property type="entry name" value="PTS_IIA_lac"/>
    <property type="match status" value="1"/>
</dbReference>
<dbReference type="Gene3D" id="1.20.58.80">
    <property type="entry name" value="Phosphotransferase system, lactose/cellobiose-type IIA subunit"/>
    <property type="match status" value="1"/>
</dbReference>
<dbReference type="InterPro" id="IPR003188">
    <property type="entry name" value="PTS_IIA_lac/cel"/>
</dbReference>
<dbReference type="InterPro" id="IPR036542">
    <property type="entry name" value="PTS_IIA_lac/cel_sf"/>
</dbReference>
<dbReference type="NCBIfam" id="TIGR00823">
    <property type="entry name" value="EIIA-LAC"/>
    <property type="match status" value="1"/>
</dbReference>
<dbReference type="PANTHER" id="PTHR34382:SF9">
    <property type="entry name" value="PHOSPHOTRANSFERASE SYSTEM SUGAR-SPECIFIC EII COMPONENT"/>
    <property type="match status" value="1"/>
</dbReference>
<dbReference type="PANTHER" id="PTHR34382">
    <property type="entry name" value="PTS SYSTEM N,N'-DIACETYLCHITOBIOSE-SPECIFIC EIIA COMPONENT"/>
    <property type="match status" value="1"/>
</dbReference>
<dbReference type="Pfam" id="PF02255">
    <property type="entry name" value="PTS_IIA"/>
    <property type="match status" value="1"/>
</dbReference>
<dbReference type="PIRSF" id="PIRSF000699">
    <property type="entry name" value="PTS_IILac_III"/>
    <property type="match status" value="1"/>
</dbReference>
<dbReference type="SUPFAM" id="SSF46973">
    <property type="entry name" value="Enzyme IIa from lactose specific PTS, IIa-lac"/>
    <property type="match status" value="1"/>
</dbReference>
<dbReference type="PROSITE" id="PS51095">
    <property type="entry name" value="PTS_EIIA_TYPE_3"/>
    <property type="match status" value="1"/>
</dbReference>
<name>PTLA_STAAC</name>
<keyword id="KW-0963">Cytoplasm</keyword>
<keyword id="KW-0460">Magnesium</keyword>
<keyword id="KW-0479">Metal-binding</keyword>
<keyword id="KW-0597">Phosphoprotein</keyword>
<keyword id="KW-0598">Phosphotransferase system</keyword>
<keyword id="KW-0762">Sugar transport</keyword>
<keyword id="KW-0808">Transferase</keyword>
<keyword id="KW-0813">Transport</keyword>
<gene>
    <name evidence="1" type="primary">lacF</name>
    <name type="ordered locus">SACOL2182</name>
</gene>
<reference key="1">
    <citation type="journal article" date="2005" name="J. Bacteriol.">
        <title>Insights on evolution of virulence and resistance from the complete genome analysis of an early methicillin-resistant Staphylococcus aureus strain and a biofilm-producing methicillin-resistant Staphylococcus epidermidis strain.</title>
        <authorList>
            <person name="Gill S.R."/>
            <person name="Fouts D.E."/>
            <person name="Archer G.L."/>
            <person name="Mongodin E.F."/>
            <person name="DeBoy R.T."/>
            <person name="Ravel J."/>
            <person name="Paulsen I.T."/>
            <person name="Kolonay J.F."/>
            <person name="Brinkac L.M."/>
            <person name="Beanan M.J."/>
            <person name="Dodson R.J."/>
            <person name="Daugherty S.C."/>
            <person name="Madupu R."/>
            <person name="Angiuoli S.V."/>
            <person name="Durkin A.S."/>
            <person name="Haft D.H."/>
            <person name="Vamathevan J.J."/>
            <person name="Khouri H."/>
            <person name="Utterback T.R."/>
            <person name="Lee C."/>
            <person name="Dimitrov G."/>
            <person name="Jiang L."/>
            <person name="Qin H."/>
            <person name="Weidman J."/>
            <person name="Tran K."/>
            <person name="Kang K.H."/>
            <person name="Hance I.R."/>
            <person name="Nelson K.E."/>
            <person name="Fraser C.M."/>
        </authorList>
    </citation>
    <scope>NUCLEOTIDE SEQUENCE [LARGE SCALE GENOMIC DNA]</scope>
    <source>
        <strain>COL</strain>
    </source>
</reference>
<protein>
    <recommendedName>
        <fullName evidence="1">PTS system lactose-specific EIIA component</fullName>
    </recommendedName>
    <alternativeName>
        <fullName evidence="1">EIIA-Lac</fullName>
    </alternativeName>
    <alternativeName>
        <fullName evidence="1">EIII-Lac</fullName>
    </alternativeName>
    <alternativeName>
        <fullName evidence="1">Lactose-specific phosphotransferase enzyme IIA component</fullName>
    </alternativeName>
</protein>